<dbReference type="EMBL" id="AE001363">
    <property type="protein sequence ID" value="AAD19195.1"/>
    <property type="molecule type" value="Genomic_DNA"/>
</dbReference>
<dbReference type="EMBL" id="AE002161">
    <property type="protein sequence ID" value="AAF38591.1"/>
    <property type="molecule type" value="Genomic_DNA"/>
</dbReference>
<dbReference type="EMBL" id="BA000008">
    <property type="protein sequence ID" value="BAA99265.1"/>
    <property type="molecule type" value="Genomic_DNA"/>
</dbReference>
<dbReference type="EMBL" id="AE009440">
    <property type="protein sequence ID" value="AAP99028.1"/>
    <property type="molecule type" value="Genomic_DNA"/>
</dbReference>
<dbReference type="PIR" id="G72001">
    <property type="entry name" value="G72001"/>
</dbReference>
<dbReference type="PIR" id="G86622">
    <property type="entry name" value="G86622"/>
</dbReference>
<dbReference type="RefSeq" id="NP_225252.1">
    <property type="nucleotide sequence ID" value="NC_000922.1"/>
</dbReference>
<dbReference type="RefSeq" id="WP_010883691.1">
    <property type="nucleotide sequence ID" value="NZ_CP173416.1"/>
</dbReference>
<dbReference type="SMR" id="Q9Z6K1"/>
<dbReference type="STRING" id="406984.CPK_ORF00482"/>
<dbReference type="KEGG" id="cpa:CP_0792"/>
<dbReference type="KEGG" id="cpj:CPj1058"/>
<dbReference type="KEGG" id="cpn:CPn_1058"/>
<dbReference type="KEGG" id="cpt:CpB1100"/>
<dbReference type="PATRIC" id="fig|115713.3.peg.1157"/>
<dbReference type="eggNOG" id="COG0760">
    <property type="taxonomic scope" value="Bacteria"/>
</dbReference>
<dbReference type="HOGENOM" id="CLU_066871_0_0_0"/>
<dbReference type="OrthoDB" id="20874at2"/>
<dbReference type="Proteomes" id="UP000000583">
    <property type="component" value="Chromosome"/>
</dbReference>
<dbReference type="Proteomes" id="UP000000801">
    <property type="component" value="Chromosome"/>
</dbReference>
<dbReference type="GO" id="GO:0003755">
    <property type="term" value="F:peptidyl-prolyl cis-trans isomerase activity"/>
    <property type="evidence" value="ECO:0007669"/>
    <property type="project" value="InterPro"/>
</dbReference>
<dbReference type="Gene3D" id="3.10.50.40">
    <property type="match status" value="1"/>
</dbReference>
<dbReference type="Gene3D" id="1.10.4030.10">
    <property type="entry name" value="Porin chaperone SurA, peptide-binding domain"/>
    <property type="match status" value="1"/>
</dbReference>
<dbReference type="InterPro" id="IPR046357">
    <property type="entry name" value="PPIase_dom_sf"/>
</dbReference>
<dbReference type="InterPro" id="IPR027304">
    <property type="entry name" value="Trigger_fact/SurA_dom_sf"/>
</dbReference>
<dbReference type="SUPFAM" id="SSF109998">
    <property type="entry name" value="Triger factor/SurA peptide-binding domain-like"/>
    <property type="match status" value="1"/>
</dbReference>
<gene>
    <name type="ordered locus">CPn_1058</name>
    <name type="ordered locus">CP_0792</name>
    <name type="ordered locus">CPj1058</name>
    <name type="ordered locus">CpB1100</name>
</gene>
<protein>
    <recommendedName>
        <fullName>Protein CPn_1058/CP_0792/CPj1058/CpB1100</fullName>
    </recommendedName>
</protein>
<evidence type="ECO:0000255" key="1"/>
<evidence type="ECO:0000305" key="2"/>
<reference key="1">
    <citation type="journal article" date="1999" name="Nat. Genet.">
        <title>Comparative genomes of Chlamydia pneumoniae and C. trachomatis.</title>
        <authorList>
            <person name="Kalman S."/>
            <person name="Mitchell W.P."/>
            <person name="Marathe R."/>
            <person name="Lammel C.J."/>
            <person name="Fan J."/>
            <person name="Hyman R.W."/>
            <person name="Olinger L."/>
            <person name="Grimwood J."/>
            <person name="Davis R.W."/>
            <person name="Stephens R.S."/>
        </authorList>
    </citation>
    <scope>NUCLEOTIDE SEQUENCE [LARGE SCALE GENOMIC DNA]</scope>
    <source>
        <strain>CWL029</strain>
    </source>
</reference>
<reference key="2">
    <citation type="journal article" date="2000" name="Nucleic Acids Res.">
        <title>Genome sequences of Chlamydia trachomatis MoPn and Chlamydia pneumoniae AR39.</title>
        <authorList>
            <person name="Read T.D."/>
            <person name="Brunham R.C."/>
            <person name="Shen C."/>
            <person name="Gill S.R."/>
            <person name="Heidelberg J.F."/>
            <person name="White O."/>
            <person name="Hickey E.K."/>
            <person name="Peterson J.D."/>
            <person name="Utterback T.R."/>
            <person name="Berry K.J."/>
            <person name="Bass S."/>
            <person name="Linher K.D."/>
            <person name="Weidman J.F."/>
            <person name="Khouri H.M."/>
            <person name="Craven B."/>
            <person name="Bowman C."/>
            <person name="Dodson R.J."/>
            <person name="Gwinn M.L."/>
            <person name="Nelson W.C."/>
            <person name="DeBoy R.T."/>
            <person name="Kolonay J.F."/>
            <person name="McClarty G."/>
            <person name="Salzberg S.L."/>
            <person name="Eisen J.A."/>
            <person name="Fraser C.M."/>
        </authorList>
    </citation>
    <scope>NUCLEOTIDE SEQUENCE [LARGE SCALE GENOMIC DNA]</scope>
    <source>
        <strain>AR39</strain>
    </source>
</reference>
<reference key="3">
    <citation type="journal article" date="2000" name="Nucleic Acids Res.">
        <title>Comparison of whole genome sequences of Chlamydia pneumoniae J138 from Japan and CWL029 from USA.</title>
        <authorList>
            <person name="Shirai M."/>
            <person name="Hirakawa H."/>
            <person name="Kimoto M."/>
            <person name="Tabuchi M."/>
            <person name="Kishi F."/>
            <person name="Ouchi K."/>
            <person name="Shiba T."/>
            <person name="Ishii K."/>
            <person name="Hattori M."/>
            <person name="Kuhara S."/>
            <person name="Nakazawa T."/>
        </authorList>
    </citation>
    <scope>NUCLEOTIDE SEQUENCE [LARGE SCALE GENOMIC DNA]</scope>
    <source>
        <strain>J138</strain>
    </source>
</reference>
<reference key="4">
    <citation type="submission" date="2002-05" db="EMBL/GenBank/DDBJ databases">
        <title>The genome sequence of Chlamydia pneumoniae TW183 and comparison with other Chlamydia strains based on whole genome sequence analysis.</title>
        <authorList>
            <person name="Geng M.M."/>
            <person name="Schuhmacher A."/>
            <person name="Muehldorfer I."/>
            <person name="Bensch K.W."/>
            <person name="Schaefer K.P."/>
            <person name="Schneider S."/>
            <person name="Pohl T."/>
            <person name="Essig A."/>
            <person name="Marre R."/>
            <person name="Melchers K."/>
        </authorList>
    </citation>
    <scope>NUCLEOTIDE SEQUENCE [LARGE SCALE GENOMIC DNA]</scope>
    <source>
        <strain>TW-183</strain>
    </source>
</reference>
<sequence>MKLYQTLRGIVLVSTGCIFLGMHGGYAAEVPVTSSGYENLLESKEQDPSGLAIHDRILFKVDEENVVTALDVIHKLNLLFYNSYPHLIDSFPARSQYYTAMWPVVLESVIDEFLMVADAKAKRIATDPTAVNQEIEEMFGRDLSPLYAHFEMSPNDIFNVIDRTLTAQRVMGMMVRSKVMLKVTPGKIREYYRKLEEEASRKVIWKYRVLTIKANTESLASQIADKVRARLNEAKTWDKDRLTALVISQGGQLVCSEEFSRENSELSQSHKQELDLIGYPKELCGLPKAHKSGYKLYMLLDKTSGSIEPLDVMESKIKQHLFALEAESVEKQYKDRLRKRYGYDASMIAKLLSEEAPPLFSLL</sequence>
<feature type="signal peptide" evidence="1">
    <location>
        <begin position="1"/>
        <end position="27"/>
    </location>
</feature>
<feature type="chain" id="PRO_0000013761" description="Protein CPn_1058/CP_0792/CPj1058/CpB1100">
    <location>
        <begin position="28"/>
        <end position="363"/>
    </location>
</feature>
<keyword id="KW-0732">Signal</keyword>
<accession>Q9Z6K1</accession>
<organism>
    <name type="scientific">Chlamydia pneumoniae</name>
    <name type="common">Chlamydophila pneumoniae</name>
    <dbReference type="NCBI Taxonomy" id="83558"/>
    <lineage>
        <taxon>Bacteria</taxon>
        <taxon>Pseudomonadati</taxon>
        <taxon>Chlamydiota</taxon>
        <taxon>Chlamydiia</taxon>
        <taxon>Chlamydiales</taxon>
        <taxon>Chlamydiaceae</taxon>
        <taxon>Chlamydia/Chlamydophila group</taxon>
        <taxon>Chlamydia</taxon>
    </lineage>
</organism>
<name>Y1058_CHLPN</name>
<proteinExistence type="inferred from homology"/>
<comment type="similarity">
    <text evidence="2">Belongs to the chlamydial CPn_1058/CT_355/TC_0634 family.</text>
</comment>